<dbReference type="EC" id="2.1.1.67"/>
<dbReference type="EMBL" id="AY827079">
    <property type="protein sequence ID" value="AAX37643.1"/>
    <property type="molecule type" value="mRNA"/>
</dbReference>
<dbReference type="RefSeq" id="XP_004043361.1">
    <property type="nucleotide sequence ID" value="XM_004043313.5"/>
</dbReference>
<dbReference type="RefSeq" id="XP_018884930.1">
    <property type="nucleotide sequence ID" value="XM_019029385.3"/>
</dbReference>
<dbReference type="BMRB" id="Q3BCR3"/>
<dbReference type="SMR" id="Q3BCR3"/>
<dbReference type="FunCoup" id="Q3BCR3">
    <property type="interactions" value="537"/>
</dbReference>
<dbReference type="STRING" id="9593.ENSGGOP00000015758"/>
<dbReference type="Ensembl" id="ENSGGOT00000016209.3">
    <property type="protein sequence ID" value="ENSGGOP00000015758.2"/>
    <property type="gene ID" value="ENSGGOG00000016155.3"/>
</dbReference>
<dbReference type="GeneID" id="101127379"/>
<dbReference type="KEGG" id="ggo:101127379"/>
<dbReference type="CTD" id="7172"/>
<dbReference type="eggNOG" id="ENOG502QSF5">
    <property type="taxonomic scope" value="Eukaryota"/>
</dbReference>
<dbReference type="GeneTree" id="ENSGT00390000016823"/>
<dbReference type="HOGENOM" id="CLU_085515_2_0_1"/>
<dbReference type="InParanoid" id="Q3BCR3"/>
<dbReference type="OMA" id="LWCGDFF"/>
<dbReference type="Proteomes" id="UP000001519">
    <property type="component" value="Chromosome 6"/>
</dbReference>
<dbReference type="Bgee" id="ENSGGOG00000016155">
    <property type="expression patterns" value="Expressed in adult mammalian kidney and 6 other cell types or tissues"/>
</dbReference>
<dbReference type="GO" id="GO:0005737">
    <property type="term" value="C:cytoplasm"/>
    <property type="evidence" value="ECO:0007669"/>
    <property type="project" value="UniProtKB-SubCell"/>
</dbReference>
<dbReference type="GO" id="GO:1904047">
    <property type="term" value="F:S-adenosyl-L-methionine binding"/>
    <property type="evidence" value="ECO:0007669"/>
    <property type="project" value="Ensembl"/>
</dbReference>
<dbReference type="GO" id="GO:0008119">
    <property type="term" value="F:thiopurine S-methyltransferase activity"/>
    <property type="evidence" value="ECO:0000318"/>
    <property type="project" value="GO_Central"/>
</dbReference>
<dbReference type="GO" id="GO:0032259">
    <property type="term" value="P:methylation"/>
    <property type="evidence" value="ECO:0007669"/>
    <property type="project" value="UniProtKB-KW"/>
</dbReference>
<dbReference type="GO" id="GO:0006805">
    <property type="term" value="P:xenobiotic metabolic process"/>
    <property type="evidence" value="ECO:0007669"/>
    <property type="project" value="Ensembl"/>
</dbReference>
<dbReference type="FunFam" id="3.40.50.150:FF:000101">
    <property type="entry name" value="Thiopurine S-methyltransferase"/>
    <property type="match status" value="1"/>
</dbReference>
<dbReference type="Gene3D" id="3.40.50.150">
    <property type="entry name" value="Vaccinia Virus protein VP39"/>
    <property type="match status" value="1"/>
</dbReference>
<dbReference type="HAMAP" id="MF_00812">
    <property type="entry name" value="Thiopur_methtran"/>
    <property type="match status" value="1"/>
</dbReference>
<dbReference type="InterPro" id="IPR029063">
    <property type="entry name" value="SAM-dependent_MTases_sf"/>
</dbReference>
<dbReference type="InterPro" id="IPR025835">
    <property type="entry name" value="Thiopurine_S-MeTrfase"/>
</dbReference>
<dbReference type="InterPro" id="IPR008854">
    <property type="entry name" value="TPMT"/>
</dbReference>
<dbReference type="PANTHER" id="PTHR10259">
    <property type="entry name" value="THIOPURINE S-METHYLTRANSFERASE"/>
    <property type="match status" value="1"/>
</dbReference>
<dbReference type="PANTHER" id="PTHR10259:SF11">
    <property type="entry name" value="THIOPURINE S-METHYLTRANSFERASE"/>
    <property type="match status" value="1"/>
</dbReference>
<dbReference type="Pfam" id="PF05724">
    <property type="entry name" value="TPMT"/>
    <property type="match status" value="1"/>
</dbReference>
<dbReference type="PIRSF" id="PIRSF023956">
    <property type="entry name" value="Thiopurine_S-methyltransferase"/>
    <property type="match status" value="1"/>
</dbReference>
<dbReference type="SUPFAM" id="SSF53335">
    <property type="entry name" value="S-adenosyl-L-methionine-dependent methyltransferases"/>
    <property type="match status" value="1"/>
</dbReference>
<dbReference type="PROSITE" id="PS51585">
    <property type="entry name" value="SAM_MT_TPMT"/>
    <property type="match status" value="1"/>
</dbReference>
<reference key="1">
    <citation type="journal article" date="2005" name="Pharmacogenet. Genomics">
        <title>Thiopurine S-methyltransferase pharmacogenetics: variant allele functional and comparative genomics.</title>
        <authorList>
            <person name="Salavaggione O.E."/>
            <person name="Wang L."/>
            <person name="Wiepert M."/>
            <person name="Yee V.C."/>
            <person name="Weinshilboum R.M."/>
        </authorList>
    </citation>
    <scope>NUCLEOTIDE SEQUENCE [MRNA]</scope>
</reference>
<gene>
    <name type="primary">TPMT</name>
</gene>
<feature type="chain" id="PRO_0000220100" description="Thiopurine S-methyltransferase">
    <location>
        <begin position="1"/>
        <end position="245"/>
    </location>
</feature>
<feature type="binding site" evidence="1">
    <location>
        <begin position="29"/>
        <end position="40"/>
    </location>
    <ligand>
        <name>S-adenosyl-L-methionine</name>
        <dbReference type="ChEBI" id="CHEBI:59789"/>
    </ligand>
</feature>
<feature type="binding site" evidence="1">
    <location>
        <position position="40"/>
    </location>
    <ligand>
        <name>substrate</name>
    </ligand>
</feature>
<feature type="binding site" evidence="1">
    <location>
        <position position="69"/>
    </location>
    <ligand>
        <name>S-adenosyl-L-methionine</name>
        <dbReference type="ChEBI" id="CHEBI:59789"/>
    </ligand>
</feature>
<feature type="binding site" evidence="1">
    <location>
        <position position="90"/>
    </location>
    <ligand>
        <name>S-adenosyl-L-methionine</name>
        <dbReference type="ChEBI" id="CHEBI:59789"/>
    </ligand>
</feature>
<feature type="binding site" evidence="1">
    <location>
        <begin position="134"/>
        <end position="135"/>
    </location>
    <ligand>
        <name>S-adenosyl-L-methionine</name>
        <dbReference type="ChEBI" id="CHEBI:59789"/>
    </ligand>
</feature>
<feature type="binding site" evidence="1">
    <location>
        <position position="152"/>
    </location>
    <ligand>
        <name>S-adenosyl-L-methionine</name>
        <dbReference type="ChEBI" id="CHEBI:59789"/>
    </ligand>
</feature>
<feature type="modified residue" description="Phosphoserine" evidence="2">
    <location>
        <position position="14"/>
    </location>
</feature>
<feature type="modified residue" description="N6-acetyllysine" evidence="2">
    <location>
        <position position="58"/>
    </location>
</feature>
<sequence length="245" mass="28146">MDGTRTSLDIEEYSDTEVQKNQVLTLEEWQDKWVNGKTAFHQEQGHQLLKKHLDTFLKGKSGLRVFFPLCGKAVEMKWFADRGHSVVGVEISELGIQEFFTEQNLSYSEEPITEIPGTKVFKSSSGNISLYCCSIFDLPRTNIGKFDMIWDRGALVAINPGDRKCYADTMLSLLGKKFQYLLCVLSYDPTKHPGPPFYVPHAEIERLFGKICNIRCLEKVDAFEERHKSWGIDCLFEKLYLLTEK</sequence>
<proteinExistence type="evidence at transcript level"/>
<comment type="catalytic activity">
    <reaction evidence="2">
        <text>S-adenosyl-L-methionine + a thiopurine = S-adenosyl-L-homocysteine + a thiopurine S-methylether.</text>
        <dbReference type="EC" id="2.1.1.67"/>
    </reaction>
</comment>
<comment type="subunit">
    <text evidence="2">Monomer.</text>
</comment>
<comment type="subcellular location">
    <subcellularLocation>
        <location>Cytoplasm</location>
    </subcellularLocation>
</comment>
<comment type="similarity">
    <text evidence="3">Belongs to the class I-like SAM-binding methyltransferase superfamily. TPMT family.</text>
</comment>
<protein>
    <recommendedName>
        <fullName>Thiopurine S-methyltransferase</fullName>
        <ecNumber>2.1.1.67</ecNumber>
    </recommendedName>
    <alternativeName>
        <fullName>Thiopurine methyltransferase</fullName>
    </alternativeName>
</protein>
<accession>Q3BCR3</accession>
<name>TPMT_GORGO</name>
<evidence type="ECO:0000250" key="1"/>
<evidence type="ECO:0000250" key="2">
    <source>
        <dbReference type="UniProtKB" id="P51580"/>
    </source>
</evidence>
<evidence type="ECO:0000305" key="3"/>
<organism>
    <name type="scientific">Gorilla gorilla gorilla</name>
    <name type="common">Western lowland gorilla</name>
    <dbReference type="NCBI Taxonomy" id="9595"/>
    <lineage>
        <taxon>Eukaryota</taxon>
        <taxon>Metazoa</taxon>
        <taxon>Chordata</taxon>
        <taxon>Craniata</taxon>
        <taxon>Vertebrata</taxon>
        <taxon>Euteleostomi</taxon>
        <taxon>Mammalia</taxon>
        <taxon>Eutheria</taxon>
        <taxon>Euarchontoglires</taxon>
        <taxon>Primates</taxon>
        <taxon>Haplorrhini</taxon>
        <taxon>Catarrhini</taxon>
        <taxon>Hominidae</taxon>
        <taxon>Gorilla</taxon>
    </lineage>
</organism>
<keyword id="KW-0007">Acetylation</keyword>
<keyword id="KW-0963">Cytoplasm</keyword>
<keyword id="KW-0489">Methyltransferase</keyword>
<keyword id="KW-0597">Phosphoprotein</keyword>
<keyword id="KW-1185">Reference proteome</keyword>
<keyword id="KW-0949">S-adenosyl-L-methionine</keyword>
<keyword id="KW-0808">Transferase</keyword>